<comment type="function">
    <text evidence="1">NDH shuttles electrons from NAD(P)H:plastoquinone, via FMN and iron-sulfur (Fe-S) centers, to quinones in the photosynthetic chain and possibly in a chloroplast respiratory chain. The immediate electron acceptor for the enzyme in this species is believed to be plastoquinone. Couples the redox reaction to proton translocation, and thus conserves the redox energy in a proton gradient.</text>
</comment>
<comment type="catalytic activity">
    <reaction evidence="1">
        <text>a plastoquinone + NADH + (n+1) H(+)(in) = a plastoquinol + NAD(+) + n H(+)(out)</text>
        <dbReference type="Rhea" id="RHEA:42608"/>
        <dbReference type="Rhea" id="RHEA-COMP:9561"/>
        <dbReference type="Rhea" id="RHEA-COMP:9562"/>
        <dbReference type="ChEBI" id="CHEBI:15378"/>
        <dbReference type="ChEBI" id="CHEBI:17757"/>
        <dbReference type="ChEBI" id="CHEBI:57540"/>
        <dbReference type="ChEBI" id="CHEBI:57945"/>
        <dbReference type="ChEBI" id="CHEBI:62192"/>
    </reaction>
</comment>
<comment type="catalytic activity">
    <reaction evidence="1">
        <text>a plastoquinone + NADPH + (n+1) H(+)(in) = a plastoquinol + NADP(+) + n H(+)(out)</text>
        <dbReference type="Rhea" id="RHEA:42612"/>
        <dbReference type="Rhea" id="RHEA-COMP:9561"/>
        <dbReference type="Rhea" id="RHEA-COMP:9562"/>
        <dbReference type="ChEBI" id="CHEBI:15378"/>
        <dbReference type="ChEBI" id="CHEBI:17757"/>
        <dbReference type="ChEBI" id="CHEBI:57783"/>
        <dbReference type="ChEBI" id="CHEBI:58349"/>
        <dbReference type="ChEBI" id="CHEBI:62192"/>
    </reaction>
</comment>
<comment type="subunit">
    <text evidence="1">NDH is composed of at least 16 different subunits, 5 of which are encoded in the nucleus.</text>
</comment>
<comment type="subcellular location">
    <subcellularLocation>
        <location evidence="1">Plastid</location>
        <location evidence="1">Chloroplast thylakoid membrane</location>
        <topology evidence="1">Multi-pass membrane protein</topology>
    </subcellularLocation>
</comment>
<comment type="similarity">
    <text evidence="1">Belongs to the complex I subunit 3 family.</text>
</comment>
<comment type="caution">
    <text evidence="2">A stretch of the chloroplast genome is duplicated within chromosome 10 resulting in the duplication of the gene. The expression of this duplicated gene has not been demonstrated.</text>
</comment>
<accession>P0C322</accession>
<accession>P12126</accession>
<accession>Q6QY70</accession>
<accession>Q7G225</accession>
<sequence length="120" mass="13900">MFLLHEYDIFWAFLIIASLIPILAFWISALLAPVREGPEKLSSYESGIEPMGGAWLQFRIRYYMFALVFVVFDVETVFLYPWAMSFDVLGISVFIEAFIFVLILVVGLVYAWRKGALEWS</sequence>
<feature type="chain" id="PRO_0000288693" description="NAD(P)H-quinone oxidoreductase subunit 3, chloroplastic">
    <location>
        <begin position="1"/>
        <end position="120"/>
    </location>
</feature>
<feature type="transmembrane region" description="Helical" evidence="1">
    <location>
        <begin position="9"/>
        <end position="29"/>
    </location>
</feature>
<feature type="transmembrane region" description="Helical" evidence="1">
    <location>
        <begin position="64"/>
        <end position="84"/>
    </location>
</feature>
<feature type="transmembrane region" description="Helical" evidence="1">
    <location>
        <begin position="88"/>
        <end position="108"/>
    </location>
</feature>
<geneLocation type="chloroplast"/>
<reference key="1">
    <citation type="journal article" date="1989" name="Mol. Gen. Genet.">
        <title>The complete sequence of the rice (Oryza sativa) chloroplast genome: intermolecular recombination between distinct tRNA genes accounts for a major plastid DNA inversion during the evolution of the cereals.</title>
        <authorList>
            <person name="Hiratsuka J."/>
            <person name="Shimada H."/>
            <person name="Whittier R."/>
            <person name="Ishibashi T."/>
            <person name="Sakamoto M."/>
            <person name="Mori M."/>
            <person name="Kondo C."/>
            <person name="Honji Y."/>
            <person name="Sun C.-R."/>
            <person name="Meng B.-Y."/>
            <person name="Li Y.-Q."/>
            <person name="Kanno A."/>
            <person name="Nishizawa Y."/>
            <person name="Hirai A."/>
            <person name="Shinozaki K."/>
            <person name="Sugiura M."/>
        </authorList>
    </citation>
    <scope>NUCLEOTIDE SEQUENCE [LARGE SCALE GENOMIC DNA]</scope>
    <source>
        <strain>cv. Nipponbare</strain>
    </source>
</reference>
<reference key="2">
    <citation type="journal article" date="2004" name="Plant Physiol.">
        <title>A comparison of rice chloroplast genomes.</title>
        <authorList>
            <person name="Tang J."/>
            <person name="Xia H."/>
            <person name="Cao M."/>
            <person name="Zhang X."/>
            <person name="Zeng W."/>
            <person name="Hu S."/>
            <person name="Tong W."/>
            <person name="Wang J."/>
            <person name="Wang J."/>
            <person name="Yu J."/>
            <person name="Yang H."/>
            <person name="Zhu L."/>
        </authorList>
    </citation>
    <scope>NUCLEOTIDE SEQUENCE [LARGE SCALE GENOMIC DNA]</scope>
    <source>
        <strain>cv. Nipponbare</strain>
    </source>
</reference>
<reference key="3">
    <citation type="journal article" date="2003" name="Science">
        <title>In-depth view of structure, activity, and evolution of rice chromosome 10.</title>
        <authorList>
            <person name="Yu Y."/>
            <person name="Rambo T."/>
            <person name="Currie J."/>
            <person name="Saski C."/>
            <person name="Kim H.-R."/>
            <person name="Collura K."/>
            <person name="Thompson S."/>
            <person name="Simmons J."/>
            <person name="Yang T.-J."/>
            <person name="Nah G."/>
            <person name="Patel A.J."/>
            <person name="Thurmond S."/>
            <person name="Henry D."/>
            <person name="Oates R."/>
            <person name="Palmer M."/>
            <person name="Pries G."/>
            <person name="Gibson J."/>
            <person name="Anderson H."/>
            <person name="Paradkar M."/>
            <person name="Crane L."/>
            <person name="Dale J."/>
            <person name="Carver M.B."/>
            <person name="Wood T."/>
            <person name="Frisch D."/>
            <person name="Engler F."/>
            <person name="Soderlund C."/>
            <person name="Palmer L.E."/>
            <person name="Teytelman L."/>
            <person name="Nascimento L."/>
            <person name="De la Bastide M."/>
            <person name="Spiegel L."/>
            <person name="Ware D."/>
            <person name="O'Shaughnessy A."/>
            <person name="Dike S."/>
            <person name="Dedhia N."/>
            <person name="Preston R."/>
            <person name="Huang E."/>
            <person name="Ferraro K."/>
            <person name="Kuit K."/>
            <person name="Miller B."/>
            <person name="Zutavern T."/>
            <person name="Katzenberger F."/>
            <person name="Muller S."/>
            <person name="Balija V."/>
            <person name="Martienssen R.A."/>
            <person name="Stein L."/>
            <person name="Minx P."/>
            <person name="Johnson D."/>
            <person name="Cordum H."/>
            <person name="Mardis E."/>
            <person name="Cheng Z."/>
            <person name="Jiang J."/>
            <person name="Wilson R."/>
            <person name="McCombie W.R."/>
            <person name="Wing R.A."/>
            <person name="Yuan Q."/>
            <person name="Ouyang S."/>
            <person name="Liu J."/>
            <person name="Jones K.M."/>
            <person name="Gansberger K."/>
            <person name="Moffat K."/>
            <person name="Hill J."/>
            <person name="Tsitrin T."/>
            <person name="Overton L."/>
            <person name="Bera J."/>
            <person name="Kim M."/>
            <person name="Jin S."/>
            <person name="Tallon L."/>
            <person name="Ciecko A."/>
            <person name="Pai G."/>
            <person name="Van Aken S."/>
            <person name="Utterback T."/>
            <person name="Reidmuller S."/>
            <person name="Bormann J."/>
            <person name="Feldblyum T."/>
            <person name="Hsiao J."/>
            <person name="Zismann V."/>
            <person name="Blunt S."/>
            <person name="de Vazeille A.R."/>
            <person name="Shaffer T."/>
            <person name="Koo H."/>
            <person name="Suh B."/>
            <person name="Yang Q."/>
            <person name="Haas B."/>
            <person name="Peterson J."/>
            <person name="Pertea M."/>
            <person name="Volfovsky N."/>
            <person name="Wortman J."/>
            <person name="White O."/>
            <person name="Salzberg S.L."/>
            <person name="Fraser C.M."/>
            <person name="Buell C.R."/>
            <person name="Messing J."/>
            <person name="Song R."/>
            <person name="Fuks G."/>
            <person name="Llaca V."/>
            <person name="Kovchak S."/>
            <person name="Young S."/>
            <person name="Bowers J.E."/>
            <person name="Paterson A.H."/>
            <person name="Johns M.A."/>
            <person name="Mao L."/>
            <person name="Pan H."/>
            <person name="Dean R.A."/>
        </authorList>
    </citation>
    <scope>NUCLEOTIDE SEQUENCE [LARGE SCALE GENOMIC DNA]</scope>
    <source>
        <strain>cv. Nipponbare</strain>
    </source>
</reference>
<organism>
    <name type="scientific">Oryza sativa subsp. japonica</name>
    <name type="common">Rice</name>
    <dbReference type="NCBI Taxonomy" id="39947"/>
    <lineage>
        <taxon>Eukaryota</taxon>
        <taxon>Viridiplantae</taxon>
        <taxon>Streptophyta</taxon>
        <taxon>Embryophyta</taxon>
        <taxon>Tracheophyta</taxon>
        <taxon>Spermatophyta</taxon>
        <taxon>Magnoliopsida</taxon>
        <taxon>Liliopsida</taxon>
        <taxon>Poales</taxon>
        <taxon>Poaceae</taxon>
        <taxon>BOP clade</taxon>
        <taxon>Oryzoideae</taxon>
        <taxon>Oryzeae</taxon>
        <taxon>Oryzinae</taxon>
        <taxon>Oryza</taxon>
        <taxon>Oryza sativa</taxon>
    </lineage>
</organism>
<keyword id="KW-0150">Chloroplast</keyword>
<keyword id="KW-0472">Membrane</keyword>
<keyword id="KW-0520">NAD</keyword>
<keyword id="KW-0521">NADP</keyword>
<keyword id="KW-0934">Plastid</keyword>
<keyword id="KW-0618">Plastoquinone</keyword>
<keyword id="KW-0874">Quinone</keyword>
<keyword id="KW-1185">Reference proteome</keyword>
<keyword id="KW-0793">Thylakoid</keyword>
<keyword id="KW-1278">Translocase</keyword>
<keyword id="KW-0812">Transmembrane</keyword>
<keyword id="KW-1133">Transmembrane helix</keyword>
<keyword id="KW-0813">Transport</keyword>
<dbReference type="EC" id="7.1.1.-" evidence="1"/>
<dbReference type="EMBL" id="X15901">
    <property type="protein sequence ID" value="CAA34001.1"/>
    <property type="molecule type" value="Genomic_DNA"/>
</dbReference>
<dbReference type="EMBL" id="AY522330">
    <property type="protein sequence ID" value="AAS46125.1"/>
    <property type="molecule type" value="Genomic_DNA"/>
</dbReference>
<dbReference type="EMBL" id="AC074232">
    <property type="protein sequence ID" value="AAM12481.1"/>
    <property type="molecule type" value="Genomic_DNA"/>
</dbReference>
<dbReference type="PIR" id="JQ0228">
    <property type="entry name" value="DERZN3"/>
</dbReference>
<dbReference type="RefSeq" id="NP_039388.1">
    <property type="nucleotide sequence ID" value="NC_001320.1"/>
</dbReference>
<dbReference type="SMR" id="P0C322"/>
<dbReference type="FunCoup" id="P0C322">
    <property type="interactions" value="40"/>
</dbReference>
<dbReference type="STRING" id="39947.P0C322"/>
<dbReference type="PaxDb" id="39947-P0C322"/>
<dbReference type="GeneID" id="3131460"/>
<dbReference type="KEGG" id="dosa:CAA34001.1"/>
<dbReference type="KEGG" id="osa:3131460"/>
<dbReference type="InParanoid" id="P0C322"/>
<dbReference type="OrthoDB" id="1852333at2759"/>
<dbReference type="Proteomes" id="UP000000763">
    <property type="component" value="Chromosome 10"/>
</dbReference>
<dbReference type="Proteomes" id="UP000059680">
    <property type="component" value="Chloroplast"/>
</dbReference>
<dbReference type="GO" id="GO:0009535">
    <property type="term" value="C:chloroplast thylakoid membrane"/>
    <property type="evidence" value="ECO:0007669"/>
    <property type="project" value="UniProtKB-SubCell"/>
</dbReference>
<dbReference type="GO" id="GO:0030964">
    <property type="term" value="C:NADH dehydrogenase complex"/>
    <property type="evidence" value="ECO:0000318"/>
    <property type="project" value="GO_Central"/>
</dbReference>
<dbReference type="GO" id="GO:0009536">
    <property type="term" value="C:plastid"/>
    <property type="evidence" value="ECO:0000305"/>
    <property type="project" value="Gramene"/>
</dbReference>
<dbReference type="GO" id="GO:0008137">
    <property type="term" value="F:NADH dehydrogenase (ubiquinone) activity"/>
    <property type="evidence" value="ECO:0000318"/>
    <property type="project" value="GO_Central"/>
</dbReference>
<dbReference type="GO" id="GO:0048038">
    <property type="term" value="F:quinone binding"/>
    <property type="evidence" value="ECO:0007669"/>
    <property type="project" value="UniProtKB-KW"/>
</dbReference>
<dbReference type="GO" id="GO:0019684">
    <property type="term" value="P:photosynthesis, light reaction"/>
    <property type="evidence" value="ECO:0007669"/>
    <property type="project" value="UniProtKB-UniRule"/>
</dbReference>
<dbReference type="FunFam" id="1.20.58.1610:FF:000001">
    <property type="entry name" value="NAD(P)H-quinone oxidoreductase subunit 3, chloroplastic"/>
    <property type="match status" value="1"/>
</dbReference>
<dbReference type="Gene3D" id="1.20.58.1610">
    <property type="entry name" value="NADH:ubiquinone/plastoquinone oxidoreductase, chain 3"/>
    <property type="match status" value="1"/>
</dbReference>
<dbReference type="HAMAP" id="MF_01394">
    <property type="entry name" value="NDH1_NuoA"/>
    <property type="match status" value="1"/>
</dbReference>
<dbReference type="InterPro" id="IPR023043">
    <property type="entry name" value="NAD(P)H_OxRDtase_bac/plastid"/>
</dbReference>
<dbReference type="InterPro" id="IPR000440">
    <property type="entry name" value="NADH_UbQ/plastoQ_OxRdtase_su3"/>
</dbReference>
<dbReference type="InterPro" id="IPR038430">
    <property type="entry name" value="NDAH_ubi_oxred_su3_sf"/>
</dbReference>
<dbReference type="PANTHER" id="PTHR11058">
    <property type="entry name" value="NADH-UBIQUINONE OXIDOREDUCTASE CHAIN 3"/>
    <property type="match status" value="1"/>
</dbReference>
<dbReference type="PANTHER" id="PTHR11058:SF9">
    <property type="entry name" value="NADH-UBIQUINONE OXIDOREDUCTASE CHAIN 3"/>
    <property type="match status" value="1"/>
</dbReference>
<dbReference type="Pfam" id="PF00507">
    <property type="entry name" value="Oxidored_q4"/>
    <property type="match status" value="1"/>
</dbReference>
<protein>
    <recommendedName>
        <fullName evidence="1">NAD(P)H-quinone oxidoreductase subunit 3, chloroplastic</fullName>
        <ecNumber evidence="1">7.1.1.-</ecNumber>
    </recommendedName>
    <alternativeName>
        <fullName evidence="1">NAD(P)H dehydrogenase subunit 3</fullName>
    </alternativeName>
    <alternativeName>
        <fullName evidence="1">NADH-plastoquinone oxidoreductase subunit 3</fullName>
    </alternativeName>
</protein>
<gene>
    <name evidence="1" type="primary">ndhC</name>
    <name type="ORF">Nip059</name>
</gene>
<name>NU3C_ORYSJ</name>
<proteinExistence type="inferred from homology"/>
<evidence type="ECO:0000255" key="1">
    <source>
        <dbReference type="HAMAP-Rule" id="MF_01394"/>
    </source>
</evidence>
<evidence type="ECO:0000305" key="2"/>